<comment type="function">
    <text evidence="1">Associates with the EF-Tu.GDP complex and induces the exchange of GDP to GTP. It remains bound to the aminoacyl-tRNA.EF-Tu.GTP complex up to the GTP hydrolysis stage on the ribosome.</text>
</comment>
<comment type="subcellular location">
    <subcellularLocation>
        <location evidence="1">Cytoplasm</location>
    </subcellularLocation>
</comment>
<comment type="similarity">
    <text evidence="1">Belongs to the EF-Ts family.</text>
</comment>
<proteinExistence type="inferred from homology"/>
<accession>C4XMY1</accession>
<keyword id="KW-0963">Cytoplasm</keyword>
<keyword id="KW-0251">Elongation factor</keyword>
<keyword id="KW-0648">Protein biosynthesis</keyword>
<reference key="1">
    <citation type="journal article" date="2009" name="Genome Res.">
        <title>Whole genome sequence of Desulfovibrio magneticus strain RS-1 revealed common gene clusters in magnetotactic bacteria.</title>
        <authorList>
            <person name="Nakazawa H."/>
            <person name="Arakaki A."/>
            <person name="Narita-Yamada S."/>
            <person name="Yashiro I."/>
            <person name="Jinno K."/>
            <person name="Aoki N."/>
            <person name="Tsuruyama A."/>
            <person name="Okamura Y."/>
            <person name="Tanikawa S."/>
            <person name="Fujita N."/>
            <person name="Takeyama H."/>
            <person name="Matsunaga T."/>
        </authorList>
    </citation>
    <scope>NUCLEOTIDE SEQUENCE [LARGE SCALE GENOMIC DNA]</scope>
    <source>
        <strain>ATCC 700980 / DSM 13731 / RS-1</strain>
    </source>
</reference>
<evidence type="ECO:0000255" key="1">
    <source>
        <dbReference type="HAMAP-Rule" id="MF_00050"/>
    </source>
</evidence>
<gene>
    <name evidence="1" type="primary">tsf</name>
    <name type="ordered locus">DMR_37930</name>
</gene>
<name>EFTS_SOLM1</name>
<protein>
    <recommendedName>
        <fullName evidence="1">Elongation factor Ts</fullName>
        <shortName evidence="1">EF-Ts</shortName>
    </recommendedName>
</protein>
<dbReference type="EMBL" id="AP010904">
    <property type="protein sequence ID" value="BAH77284.1"/>
    <property type="molecule type" value="Genomic_DNA"/>
</dbReference>
<dbReference type="RefSeq" id="WP_015862424.1">
    <property type="nucleotide sequence ID" value="NC_012796.1"/>
</dbReference>
<dbReference type="SMR" id="C4XMY1"/>
<dbReference type="STRING" id="573370.DMR_37930"/>
<dbReference type="KEGG" id="dma:DMR_37930"/>
<dbReference type="eggNOG" id="COG0264">
    <property type="taxonomic scope" value="Bacteria"/>
</dbReference>
<dbReference type="HOGENOM" id="CLU_047155_1_1_7"/>
<dbReference type="OrthoDB" id="9808348at2"/>
<dbReference type="Proteomes" id="UP000009071">
    <property type="component" value="Chromosome"/>
</dbReference>
<dbReference type="GO" id="GO:0005737">
    <property type="term" value="C:cytoplasm"/>
    <property type="evidence" value="ECO:0007669"/>
    <property type="project" value="UniProtKB-SubCell"/>
</dbReference>
<dbReference type="GO" id="GO:0003746">
    <property type="term" value="F:translation elongation factor activity"/>
    <property type="evidence" value="ECO:0007669"/>
    <property type="project" value="UniProtKB-UniRule"/>
</dbReference>
<dbReference type="CDD" id="cd14275">
    <property type="entry name" value="UBA_EF-Ts"/>
    <property type="match status" value="1"/>
</dbReference>
<dbReference type="FunFam" id="1.10.286.20:FF:000001">
    <property type="entry name" value="Elongation factor Ts"/>
    <property type="match status" value="1"/>
</dbReference>
<dbReference type="FunFam" id="1.10.8.10:FF:000001">
    <property type="entry name" value="Elongation factor Ts"/>
    <property type="match status" value="1"/>
</dbReference>
<dbReference type="Gene3D" id="1.10.286.20">
    <property type="match status" value="1"/>
</dbReference>
<dbReference type="Gene3D" id="1.10.8.10">
    <property type="entry name" value="DNA helicase RuvA subunit, C-terminal domain"/>
    <property type="match status" value="1"/>
</dbReference>
<dbReference type="Gene3D" id="3.30.479.20">
    <property type="entry name" value="Elongation factor Ts, dimerisation domain"/>
    <property type="match status" value="1"/>
</dbReference>
<dbReference type="HAMAP" id="MF_00050">
    <property type="entry name" value="EF_Ts"/>
    <property type="match status" value="1"/>
</dbReference>
<dbReference type="InterPro" id="IPR036402">
    <property type="entry name" value="EF-Ts_dimer_sf"/>
</dbReference>
<dbReference type="InterPro" id="IPR001816">
    <property type="entry name" value="Transl_elong_EFTs/EF1B"/>
</dbReference>
<dbReference type="InterPro" id="IPR014039">
    <property type="entry name" value="Transl_elong_EFTs/EF1B_dimer"/>
</dbReference>
<dbReference type="InterPro" id="IPR018101">
    <property type="entry name" value="Transl_elong_Ts_CS"/>
</dbReference>
<dbReference type="InterPro" id="IPR009060">
    <property type="entry name" value="UBA-like_sf"/>
</dbReference>
<dbReference type="NCBIfam" id="TIGR00116">
    <property type="entry name" value="tsf"/>
    <property type="match status" value="1"/>
</dbReference>
<dbReference type="PANTHER" id="PTHR11741">
    <property type="entry name" value="ELONGATION FACTOR TS"/>
    <property type="match status" value="1"/>
</dbReference>
<dbReference type="PANTHER" id="PTHR11741:SF0">
    <property type="entry name" value="ELONGATION FACTOR TS, MITOCHONDRIAL"/>
    <property type="match status" value="1"/>
</dbReference>
<dbReference type="Pfam" id="PF00889">
    <property type="entry name" value="EF_TS"/>
    <property type="match status" value="1"/>
</dbReference>
<dbReference type="SUPFAM" id="SSF54713">
    <property type="entry name" value="Elongation factor Ts (EF-Ts), dimerisation domain"/>
    <property type="match status" value="1"/>
</dbReference>
<dbReference type="SUPFAM" id="SSF46934">
    <property type="entry name" value="UBA-like"/>
    <property type="match status" value="1"/>
</dbReference>
<dbReference type="PROSITE" id="PS01126">
    <property type="entry name" value="EF_TS_1"/>
    <property type="match status" value="1"/>
</dbReference>
<dbReference type="PROSITE" id="PS01127">
    <property type="entry name" value="EF_TS_2"/>
    <property type="match status" value="1"/>
</dbReference>
<organism>
    <name type="scientific">Solidesulfovibrio magneticus (strain ATCC 700980 / DSM 13731 / RS-1)</name>
    <name type="common">Desulfovibrio magneticus</name>
    <dbReference type="NCBI Taxonomy" id="573370"/>
    <lineage>
        <taxon>Bacteria</taxon>
        <taxon>Pseudomonadati</taxon>
        <taxon>Thermodesulfobacteriota</taxon>
        <taxon>Desulfovibrionia</taxon>
        <taxon>Desulfovibrionales</taxon>
        <taxon>Desulfovibrionaceae</taxon>
        <taxon>Solidesulfovibrio</taxon>
    </lineage>
</organism>
<feature type="chain" id="PRO_1000202237" description="Elongation factor Ts">
    <location>
        <begin position="1"/>
        <end position="200"/>
    </location>
</feature>
<feature type="region of interest" description="Involved in Mg(2+) ion dislocation from EF-Tu" evidence="1">
    <location>
        <begin position="82"/>
        <end position="85"/>
    </location>
</feature>
<sequence>MSAISAASVKALRDKTGAGMMDCKKALGECNGDEEKAVAWLREKGLSKAQKRAGRATSEGVIGSYIHSNGKLGVMVEIKCETDFVARSERFLEFAKNVAMQIAAANPVCVTPEEVPADLLAKEREIFKNQAMEEGKPEAIAEKIVDGRVKKLYKEICLLEQPFIKDDKVTIKDLMNELVGVIGENVQIGRFSRMALGEDA</sequence>